<proteinExistence type="inferred from homology"/>
<comment type="function">
    <text evidence="1">Binds directly to 16S ribosomal RNA.</text>
</comment>
<comment type="similarity">
    <text evidence="1">Belongs to the bacterial ribosomal protein bS20 family.</text>
</comment>
<evidence type="ECO:0000255" key="1">
    <source>
        <dbReference type="HAMAP-Rule" id="MF_00500"/>
    </source>
</evidence>
<evidence type="ECO:0000305" key="2"/>
<feature type="chain" id="PRO_1000014584" description="Small ribosomal subunit protein bS20">
    <location>
        <begin position="1"/>
        <end position="90"/>
    </location>
</feature>
<gene>
    <name evidence="1" type="primary">rpsT</name>
    <name type="ordered locus">FTH_0066</name>
</gene>
<dbReference type="EMBL" id="CP000437">
    <property type="protein sequence ID" value="ABI82118.1"/>
    <property type="molecule type" value="Genomic_DNA"/>
</dbReference>
<dbReference type="RefSeq" id="WP_003014020.1">
    <property type="nucleotide sequence ID" value="NC_017463.1"/>
</dbReference>
<dbReference type="SMR" id="Q0BP66"/>
<dbReference type="KEGG" id="fth:FTH_0066"/>
<dbReference type="GO" id="GO:0005829">
    <property type="term" value="C:cytosol"/>
    <property type="evidence" value="ECO:0007669"/>
    <property type="project" value="TreeGrafter"/>
</dbReference>
<dbReference type="GO" id="GO:0015935">
    <property type="term" value="C:small ribosomal subunit"/>
    <property type="evidence" value="ECO:0007669"/>
    <property type="project" value="TreeGrafter"/>
</dbReference>
<dbReference type="GO" id="GO:0070181">
    <property type="term" value="F:small ribosomal subunit rRNA binding"/>
    <property type="evidence" value="ECO:0007669"/>
    <property type="project" value="TreeGrafter"/>
</dbReference>
<dbReference type="GO" id="GO:0003735">
    <property type="term" value="F:structural constituent of ribosome"/>
    <property type="evidence" value="ECO:0007669"/>
    <property type="project" value="InterPro"/>
</dbReference>
<dbReference type="GO" id="GO:0006412">
    <property type="term" value="P:translation"/>
    <property type="evidence" value="ECO:0007669"/>
    <property type="project" value="UniProtKB-UniRule"/>
</dbReference>
<dbReference type="FunFam" id="1.20.58.110:FF:000001">
    <property type="entry name" value="30S ribosomal protein S20"/>
    <property type="match status" value="1"/>
</dbReference>
<dbReference type="Gene3D" id="1.20.58.110">
    <property type="entry name" value="Ribosomal protein S20"/>
    <property type="match status" value="1"/>
</dbReference>
<dbReference type="HAMAP" id="MF_00500">
    <property type="entry name" value="Ribosomal_bS20"/>
    <property type="match status" value="1"/>
</dbReference>
<dbReference type="InterPro" id="IPR002583">
    <property type="entry name" value="Ribosomal_bS20"/>
</dbReference>
<dbReference type="InterPro" id="IPR036510">
    <property type="entry name" value="Ribosomal_bS20_sf"/>
</dbReference>
<dbReference type="NCBIfam" id="TIGR00029">
    <property type="entry name" value="S20"/>
    <property type="match status" value="1"/>
</dbReference>
<dbReference type="PANTHER" id="PTHR33398">
    <property type="entry name" value="30S RIBOSOMAL PROTEIN S20"/>
    <property type="match status" value="1"/>
</dbReference>
<dbReference type="PANTHER" id="PTHR33398:SF1">
    <property type="entry name" value="SMALL RIBOSOMAL SUBUNIT PROTEIN BS20C"/>
    <property type="match status" value="1"/>
</dbReference>
<dbReference type="Pfam" id="PF01649">
    <property type="entry name" value="Ribosomal_S20p"/>
    <property type="match status" value="1"/>
</dbReference>
<dbReference type="SUPFAM" id="SSF46992">
    <property type="entry name" value="Ribosomal protein S20"/>
    <property type="match status" value="1"/>
</dbReference>
<keyword id="KW-0687">Ribonucleoprotein</keyword>
<keyword id="KW-0689">Ribosomal protein</keyword>
<keyword id="KW-0694">RNA-binding</keyword>
<keyword id="KW-0699">rRNA-binding</keyword>
<reference key="1">
    <citation type="journal article" date="2006" name="J. Bacteriol.">
        <title>Chromosome rearrangement and diversification of Francisella tularensis revealed by the type B (OSU18) genome sequence.</title>
        <authorList>
            <person name="Petrosino J.F."/>
            <person name="Xiang Q."/>
            <person name="Karpathy S.E."/>
            <person name="Jiang H."/>
            <person name="Yerrapragada S."/>
            <person name="Liu Y."/>
            <person name="Gioia J."/>
            <person name="Hemphill L."/>
            <person name="Gonzalez A."/>
            <person name="Raghavan T.M."/>
            <person name="Uzman A."/>
            <person name="Fox G.E."/>
            <person name="Highlander S."/>
            <person name="Reichard M."/>
            <person name="Morton R.J."/>
            <person name="Clinkenbeard K.D."/>
            <person name="Weinstock G.M."/>
        </authorList>
    </citation>
    <scope>NUCLEOTIDE SEQUENCE [LARGE SCALE GENOMIC DNA]</scope>
    <source>
        <strain>OSU18</strain>
    </source>
</reference>
<organism>
    <name type="scientific">Francisella tularensis subsp. holarctica (strain OSU18)</name>
    <dbReference type="NCBI Taxonomy" id="393011"/>
    <lineage>
        <taxon>Bacteria</taxon>
        <taxon>Pseudomonadati</taxon>
        <taxon>Pseudomonadota</taxon>
        <taxon>Gammaproteobacteria</taxon>
        <taxon>Thiotrichales</taxon>
        <taxon>Francisellaceae</taxon>
        <taxon>Francisella</taxon>
    </lineage>
</organism>
<name>RS20_FRATO</name>
<sequence length="90" mass="10147">MANSKQAKKRIIQAERNRQHNVARRSMMRTFLKKTAYAIEKGDVEAAKENFTKVVPILDKYASKGLIHKNKAARHKSRLSAKIKALATAA</sequence>
<protein>
    <recommendedName>
        <fullName evidence="1">Small ribosomal subunit protein bS20</fullName>
    </recommendedName>
    <alternativeName>
        <fullName evidence="2">30S ribosomal protein S20</fullName>
    </alternativeName>
</protein>
<accession>Q0BP66</accession>